<proteinExistence type="evidence at protein level"/>
<evidence type="ECO:0000305" key="1"/>
<evidence type="ECO:0007829" key="2">
    <source>
        <dbReference type="PDB" id="1EIY"/>
    </source>
</evidence>
<evidence type="ECO:0007829" key="3">
    <source>
        <dbReference type="PDB" id="1JJC"/>
    </source>
</evidence>
<evidence type="ECO:0007829" key="4">
    <source>
        <dbReference type="PDB" id="1PYS"/>
    </source>
</evidence>
<evidence type="ECO:0007829" key="5">
    <source>
        <dbReference type="PDB" id="3HFZ"/>
    </source>
</evidence>
<accession>Q5SGX1</accession>
<gene>
    <name type="primary">pheT</name>
    <name type="ordered locus">TTHA1959</name>
</gene>
<reference key="1">
    <citation type="journal article" date="1992" name="FEBS Lett.">
        <title>Cloning and sequence analysis of the phenylalanyl-tRNA synthetase genes (pheST) from Thermus thermophilus.</title>
        <authorList>
            <person name="Keller B."/>
            <person name="Kast P."/>
            <person name="Hennecke H."/>
        </authorList>
    </citation>
    <scope>NUCLEOTIDE SEQUENCE [GENOMIC DNA]</scope>
</reference>
<reference key="2">
    <citation type="journal article" date="1992" name="Nucleic Acids Res.">
        <title>Structure of the phenylalanyl-tRNA synthetase genes from Thermus thermophilus HB8 and their expression in Escherichia coli.</title>
        <authorList>
            <person name="Kreutzer R."/>
            <person name="Kruft V."/>
            <person name="Bobkova E.V."/>
            <person name="Lavrik O.J."/>
            <person name="Sprinzl M."/>
        </authorList>
    </citation>
    <scope>NUCLEOTIDE SEQUENCE [GENOMIC DNA]</scope>
    <scope>PARTIAL PROTEIN SEQUENCE</scope>
</reference>
<reference key="3">
    <citation type="journal article" date="1998" name="J. Mol. Biol.">
        <title>The phenylalanyl-tRNA synthetase specifically binds DNA.</title>
        <authorList>
            <person name="Lechler A."/>
            <person name="Kreutzer R."/>
        </authorList>
    </citation>
    <scope>NUCLEOTIDE SEQUENCE [GENOMIC DNA]</scope>
</reference>
<reference key="4">
    <citation type="submission" date="2004-11" db="EMBL/GenBank/DDBJ databases">
        <title>Complete genome sequence of Thermus thermophilus HB8.</title>
        <authorList>
            <person name="Masui R."/>
            <person name="Kurokawa K."/>
            <person name="Nakagawa N."/>
            <person name="Tokunaga F."/>
            <person name="Koyama Y."/>
            <person name="Shibata T."/>
            <person name="Oshima T."/>
            <person name="Yokoyama S."/>
            <person name="Yasunaga T."/>
            <person name="Kuramitsu S."/>
        </authorList>
    </citation>
    <scope>NUCLEOTIDE SEQUENCE [LARGE SCALE GENOMIC DNA]</scope>
    <source>
        <strain>ATCC 27634 / DSM 579 / HB8</strain>
    </source>
</reference>
<reference key="5">
    <citation type="journal article" date="1993" name="Biochimie">
        <title>Phenylalanyl-tRNA synthetase from Thermus thermophilus has four antiparallel folds of which only two are catalytically functional.</title>
        <authorList>
            <person name="Mosyak L."/>
            <person name="Safro M."/>
        </authorList>
    </citation>
    <scope>X-RAY CRYSTALLOGRAPHY (2.9 ANGSTROMS)</scope>
</reference>
<reference key="6">
    <citation type="journal article" date="1995" name="Nat. Struct. Biol.">
        <title>Structure of phenylalanyl-tRNA synthetase from Thermus thermophilus.</title>
        <authorList>
            <person name="Mosyak L."/>
            <person name="Reshetnikova L."/>
            <person name="Goldgur Y."/>
            <person name="Delarue M."/>
            <person name="Safro M.G."/>
        </authorList>
    </citation>
    <scope>X-RAY CRYSTALLOGRAPHY (2.9 ANGSTROMS)</scope>
</reference>
<protein>
    <recommendedName>
        <fullName>Phenylalanine--tRNA ligase beta subunit</fullName>
        <ecNumber>6.1.1.20</ecNumber>
    </recommendedName>
    <alternativeName>
        <fullName>Phenylalanyl-tRNA synthetase beta subunit</fullName>
        <shortName>PheRS</shortName>
    </alternativeName>
</protein>
<comment type="catalytic activity">
    <reaction>
        <text>tRNA(Phe) + L-phenylalanine + ATP = L-phenylalanyl-tRNA(Phe) + AMP + diphosphate + H(+)</text>
        <dbReference type="Rhea" id="RHEA:19413"/>
        <dbReference type="Rhea" id="RHEA-COMP:9668"/>
        <dbReference type="Rhea" id="RHEA-COMP:9699"/>
        <dbReference type="ChEBI" id="CHEBI:15378"/>
        <dbReference type="ChEBI" id="CHEBI:30616"/>
        <dbReference type="ChEBI" id="CHEBI:33019"/>
        <dbReference type="ChEBI" id="CHEBI:58095"/>
        <dbReference type="ChEBI" id="CHEBI:78442"/>
        <dbReference type="ChEBI" id="CHEBI:78531"/>
        <dbReference type="ChEBI" id="CHEBI:456215"/>
        <dbReference type="EC" id="6.1.1.20"/>
    </reaction>
</comment>
<comment type="cofactor">
    <cofactor>
        <name>Mg(2+)</name>
        <dbReference type="ChEBI" id="CHEBI:18420"/>
    </cofactor>
    <text>Binds 2 magnesium ions per tetramer.</text>
</comment>
<comment type="subunit">
    <text>Tetramer of two alpha and two beta subunits.</text>
</comment>
<comment type="subcellular location">
    <subcellularLocation>
        <location>Cytoplasm</location>
    </subcellularLocation>
</comment>
<comment type="similarity">
    <text evidence="1">Belongs to the phenylalanyl-tRNA synthetase beta subunit family. Type 1 subfamily.</text>
</comment>
<sequence length="785" mass="86611">MRVPFSWLKAYVPELESPEVLEERLAGLGFETDRIERVFPIPRGVVFARVLEAHPIPGTRLKRLVLDAGRTVEVVSGAENARKGIGVALALPGTELPGLGQKVGERVIQGVRSFGMALSPRELGVGEYGGGLLEFPEDALPPGTPLSEAWPEEVVLDLEVTPNRPDALGLLGLARDLHALGYALVEPEAALKAEALPLPFALKVEDPEGAPHFTLGYAFGLRVAPSPLWMQRALFAAGMRPINNVVDVTNYVMLERAQPMHAFDLRFVGEGIAVRRAREGERLKTLDGVERTLHPEDLVIAGWRGEESFPLGLAGVMGGAESEVREDTEAIALEVACFDPVSIRKTARRHGLRTEASHRFERGVDPLGQVPAQRRALSLLQALAGARVAEALLEAGSPKPPEAIPFRPEYANRLLGTSYPEAEQIAILKRLGCRVEGEGPTYRVTPPSHRLDLRLEEDLVEEVARIQGYETIPLALPAFFPAPDNRGVEAPYRKEQRLREVLSGLGFQEVYTYSFMDPEDARRFRLDPPRLLLLNPLAPEKAALRTHLFPGLVRVLKENLDLDRPERALLFEVGRVFREREETHLAGLLFGEGVGLPWAKERLSGYFLLKGYLEALFARLGLAFRVEAQAFPFLHPGVSGRVLVEGEEVGFLGALHPEIAQELELPPVHLFELRLPLPDKPLAFQDPSRHPAAFRDLAVVVPAPTPYGEVEALVREAAGPYLESLALFDLYQGPPLPEGHKSLAFHLRFRHPKRTLRDEEVEEAVSRVAEALRARGFGLRGLDTP</sequence>
<organism>
    <name type="scientific">Thermus thermophilus (strain ATCC 27634 / DSM 579 / HB8)</name>
    <dbReference type="NCBI Taxonomy" id="300852"/>
    <lineage>
        <taxon>Bacteria</taxon>
        <taxon>Thermotogati</taxon>
        <taxon>Deinococcota</taxon>
        <taxon>Deinococci</taxon>
        <taxon>Thermales</taxon>
        <taxon>Thermaceae</taxon>
        <taxon>Thermus</taxon>
    </lineage>
</organism>
<keyword id="KW-0002">3D-structure</keyword>
<keyword id="KW-0030">Aminoacyl-tRNA synthetase</keyword>
<keyword id="KW-0067">ATP-binding</keyword>
<keyword id="KW-0963">Cytoplasm</keyword>
<keyword id="KW-0903">Direct protein sequencing</keyword>
<keyword id="KW-0436">Ligase</keyword>
<keyword id="KW-0460">Magnesium</keyword>
<keyword id="KW-0479">Metal-binding</keyword>
<keyword id="KW-0547">Nucleotide-binding</keyword>
<keyword id="KW-0648">Protein biosynthesis</keyword>
<keyword id="KW-1185">Reference proteome</keyword>
<keyword id="KW-0694">RNA-binding</keyword>
<keyword id="KW-0820">tRNA-binding</keyword>
<feature type="chain" id="PRO_0000126977" description="Phenylalanine--tRNA ligase beta subunit">
    <location>
        <begin position="1"/>
        <end position="785"/>
    </location>
</feature>
<feature type="domain" description="tRNA-binding">
    <location>
        <begin position="39"/>
        <end position="147"/>
    </location>
</feature>
<feature type="domain" description="B5">
    <location>
        <begin position="399"/>
        <end position="474"/>
    </location>
</feature>
<feature type="domain" description="FDX-ACB">
    <location>
        <begin position="688"/>
        <end position="780"/>
    </location>
</feature>
<feature type="binding site">
    <location>
        <position position="452"/>
    </location>
    <ligand>
        <name>Mg(2+)</name>
        <dbReference type="ChEBI" id="CHEBI:18420"/>
        <note>shared with alpha subunit</note>
    </ligand>
</feature>
<feature type="binding site">
    <location>
        <position position="458"/>
    </location>
    <ligand>
        <name>Mg(2+)</name>
        <dbReference type="ChEBI" id="CHEBI:18420"/>
        <note>shared with alpha subunit</note>
    </ligand>
</feature>
<feature type="binding site">
    <location>
        <position position="461"/>
    </location>
    <ligand>
        <name>Mg(2+)</name>
        <dbReference type="ChEBI" id="CHEBI:18420"/>
        <note>shared with alpha subunit</note>
    </ligand>
</feature>
<feature type="binding site">
    <location>
        <position position="462"/>
    </location>
    <ligand>
        <name>Mg(2+)</name>
        <dbReference type="ChEBI" id="CHEBI:18420"/>
        <note>shared with alpha subunit</note>
    </ligand>
</feature>
<feature type="sequence conflict" description="In Ref. 1." evidence="1" ref="1">
    <original>QV</original>
    <variation>AG</variation>
    <location>
        <begin position="369"/>
        <end position="370"/>
    </location>
</feature>
<feature type="sequence conflict" description="In Ref. 1." evidence="1" ref="1">
    <original>AQRRA</original>
    <variation>RPEAG</variation>
    <location>
        <begin position="372"/>
        <end position="376"/>
    </location>
</feature>
<feature type="sequence conflict" description="In Ref. 1." evidence="1" ref="1">
    <original>SLLQA</original>
    <variation>KPPPG</variation>
    <location>
        <begin position="378"/>
        <end position="382"/>
    </location>
</feature>
<feature type="strand" evidence="3">
    <location>
        <begin position="2"/>
        <end position="4"/>
    </location>
</feature>
<feature type="helix" evidence="3">
    <location>
        <begin position="5"/>
        <end position="8"/>
    </location>
</feature>
<feature type="turn" evidence="3">
    <location>
        <begin position="9"/>
        <end position="11"/>
    </location>
</feature>
<feature type="helix" evidence="3">
    <location>
        <begin position="18"/>
        <end position="28"/>
    </location>
</feature>
<feature type="strand" evidence="3">
    <location>
        <begin position="32"/>
        <end position="37"/>
    </location>
</feature>
<feature type="strand" evidence="3">
    <location>
        <begin position="45"/>
        <end position="55"/>
    </location>
</feature>
<feature type="strand" evidence="3">
    <location>
        <begin position="62"/>
        <end position="76"/>
    </location>
</feature>
<feature type="strand" evidence="3">
    <location>
        <begin position="86"/>
        <end position="90"/>
    </location>
</feature>
<feature type="strand" evidence="2">
    <location>
        <begin position="92"/>
        <end position="95"/>
    </location>
</feature>
<feature type="turn" evidence="4">
    <location>
        <begin position="97"/>
        <end position="99"/>
    </location>
</feature>
<feature type="strand" evidence="5">
    <location>
        <begin position="100"/>
        <end position="102"/>
    </location>
</feature>
<feature type="strand" evidence="3">
    <location>
        <begin position="105"/>
        <end position="108"/>
    </location>
</feature>
<feature type="strand" evidence="3">
    <location>
        <begin position="111"/>
        <end position="117"/>
    </location>
</feature>
<feature type="turn" evidence="3">
    <location>
        <begin position="120"/>
        <end position="124"/>
    </location>
</feature>
<feature type="strand" evidence="2">
    <location>
        <begin position="125"/>
        <end position="127"/>
    </location>
</feature>
<feature type="helix" evidence="3">
    <location>
        <begin position="146"/>
        <end position="149"/>
    </location>
</feature>
<feature type="strand" evidence="3">
    <location>
        <begin position="154"/>
        <end position="158"/>
    </location>
</feature>
<feature type="helix" evidence="3">
    <location>
        <begin position="166"/>
        <end position="168"/>
    </location>
</feature>
<feature type="helix" evidence="3">
    <location>
        <begin position="170"/>
        <end position="179"/>
    </location>
</feature>
<feature type="strand" evidence="3">
    <location>
        <begin position="199"/>
        <end position="205"/>
    </location>
</feature>
<feature type="turn" evidence="3">
    <location>
        <begin position="207"/>
        <end position="209"/>
    </location>
</feature>
<feature type="strand" evidence="3">
    <location>
        <begin position="211"/>
        <end position="220"/>
    </location>
</feature>
<feature type="helix" evidence="3">
    <location>
        <begin position="228"/>
        <end position="236"/>
    </location>
</feature>
<feature type="helix" evidence="3">
    <location>
        <begin position="244"/>
        <end position="256"/>
    </location>
</feature>
<feature type="strand" evidence="3">
    <location>
        <begin position="260"/>
        <end position="264"/>
    </location>
</feature>
<feature type="helix" evidence="3">
    <location>
        <begin position="265"/>
        <end position="267"/>
    </location>
</feature>
<feature type="turn" evidence="4">
    <location>
        <begin position="268"/>
        <end position="270"/>
    </location>
</feature>
<feature type="strand" evidence="3">
    <location>
        <begin position="271"/>
        <end position="276"/>
    </location>
</feature>
<feature type="strand" evidence="3">
    <location>
        <begin position="282"/>
        <end position="285"/>
    </location>
</feature>
<feature type="turn" evidence="2">
    <location>
        <begin position="286"/>
        <end position="288"/>
    </location>
</feature>
<feature type="strand" evidence="3">
    <location>
        <begin position="290"/>
        <end position="292"/>
    </location>
</feature>
<feature type="strand" evidence="3">
    <location>
        <begin position="298"/>
        <end position="304"/>
    </location>
</feature>
<feature type="strand" evidence="3">
    <location>
        <begin position="307"/>
        <end position="313"/>
    </location>
</feature>
<feature type="turn" evidence="3">
    <location>
        <begin position="314"/>
        <end position="316"/>
    </location>
</feature>
<feature type="strand" evidence="3">
    <location>
        <begin position="317"/>
        <end position="320"/>
    </location>
</feature>
<feature type="strand" evidence="3">
    <location>
        <begin position="331"/>
        <end position="337"/>
    </location>
</feature>
<feature type="helix" evidence="3">
    <location>
        <begin position="340"/>
        <end position="349"/>
    </location>
</feature>
<feature type="helix" evidence="3">
    <location>
        <begin position="355"/>
        <end position="362"/>
    </location>
</feature>
<feature type="turn" evidence="5">
    <location>
        <begin position="366"/>
        <end position="368"/>
    </location>
</feature>
<feature type="helix" evidence="3">
    <location>
        <begin position="369"/>
        <end position="384"/>
    </location>
</feature>
<feature type="strand" evidence="3">
    <location>
        <begin position="387"/>
        <end position="390"/>
    </location>
</feature>
<feature type="strand" evidence="3">
    <location>
        <begin position="393"/>
        <end position="395"/>
    </location>
</feature>
<feature type="strand" evidence="3">
    <location>
        <begin position="404"/>
        <end position="406"/>
    </location>
</feature>
<feature type="helix" evidence="3">
    <location>
        <begin position="408"/>
        <end position="415"/>
    </location>
</feature>
<feature type="helix" evidence="3">
    <location>
        <begin position="421"/>
        <end position="430"/>
    </location>
</feature>
<feature type="strand" evidence="3">
    <location>
        <begin position="434"/>
        <end position="436"/>
    </location>
</feature>
<feature type="strand" evidence="3">
    <location>
        <begin position="438"/>
        <end position="445"/>
    </location>
</feature>
<feature type="helix" evidence="3">
    <location>
        <begin position="456"/>
        <end position="467"/>
    </location>
</feature>
<feature type="helix" evidence="3">
    <location>
        <begin position="469"/>
        <end position="471"/>
    </location>
</feature>
<feature type="helix" evidence="3">
    <location>
        <begin position="483"/>
        <end position="485"/>
    </location>
</feature>
<feature type="turn" evidence="3">
    <location>
        <begin position="486"/>
        <end position="489"/>
    </location>
</feature>
<feature type="helix" evidence="3">
    <location>
        <begin position="490"/>
        <end position="505"/>
    </location>
</feature>
<feature type="strand" evidence="5">
    <location>
        <begin position="508"/>
        <end position="510"/>
    </location>
</feature>
<feature type="strand" evidence="3">
    <location>
        <begin position="514"/>
        <end position="516"/>
    </location>
</feature>
<feature type="helix" evidence="3">
    <location>
        <begin position="520"/>
        <end position="523"/>
    </location>
</feature>
<feature type="strand" evidence="3">
    <location>
        <begin position="532"/>
        <end position="535"/>
    </location>
</feature>
<feature type="helix" evidence="3">
    <location>
        <begin position="539"/>
        <end position="541"/>
    </location>
</feature>
<feature type="strand" evidence="3">
    <location>
        <begin position="542"/>
        <end position="544"/>
    </location>
</feature>
<feature type="helix" evidence="3">
    <location>
        <begin position="549"/>
        <end position="562"/>
    </location>
</feature>
<feature type="strand" evidence="3">
    <location>
        <begin position="566"/>
        <end position="592"/>
    </location>
</feature>
<feature type="helix" evidence="3">
    <location>
        <begin position="605"/>
        <end position="620"/>
    </location>
</feature>
<feature type="strand" evidence="3">
    <location>
        <begin position="624"/>
        <end position="628"/>
    </location>
</feature>
<feature type="strand" evidence="3">
    <location>
        <begin position="634"/>
        <end position="655"/>
    </location>
</feature>
<feature type="helix" evidence="3">
    <location>
        <begin position="657"/>
        <end position="662"/>
    </location>
</feature>
<feature type="strand" evidence="3">
    <location>
        <begin position="669"/>
        <end position="676"/>
    </location>
</feature>
<feature type="strand" evidence="3">
    <location>
        <begin position="693"/>
        <end position="697"/>
    </location>
</feature>
<feature type="strand" evidence="3">
    <location>
        <begin position="700"/>
        <end position="705"/>
    </location>
</feature>
<feature type="helix" evidence="3">
    <location>
        <begin position="707"/>
        <end position="718"/>
    </location>
</feature>
<feature type="strand" evidence="3">
    <location>
        <begin position="722"/>
        <end position="731"/>
    </location>
</feature>
<feature type="strand" evidence="3">
    <location>
        <begin position="740"/>
        <end position="749"/>
    </location>
</feature>
<feature type="strand" evidence="3">
    <location>
        <begin position="752"/>
        <end position="754"/>
    </location>
</feature>
<feature type="helix" evidence="3">
    <location>
        <begin position="758"/>
        <end position="773"/>
    </location>
</feature>
<feature type="turn" evidence="3">
    <location>
        <begin position="774"/>
        <end position="776"/>
    </location>
</feature>
<feature type="strand" evidence="4">
    <location>
        <begin position="778"/>
        <end position="784"/>
    </location>
</feature>
<name>SYFB_THET8</name>
<dbReference type="EC" id="6.1.1.20"/>
<dbReference type="EMBL" id="Z12118">
    <property type="protein sequence ID" value="CAA78105.1"/>
    <property type="molecule type" value="Genomic_DNA"/>
</dbReference>
<dbReference type="EMBL" id="X65609">
    <property type="protein sequence ID" value="CAA46560.1"/>
    <property type="molecule type" value="Genomic_DNA"/>
</dbReference>
<dbReference type="EMBL" id="Y15464">
    <property type="protein sequence ID" value="CAA75645.1"/>
    <property type="molecule type" value="Genomic_DNA"/>
</dbReference>
<dbReference type="EMBL" id="AP008226">
    <property type="protein sequence ID" value="BAD71782.1"/>
    <property type="molecule type" value="Genomic_DNA"/>
</dbReference>
<dbReference type="PIR" id="S22367">
    <property type="entry name" value="S22367"/>
</dbReference>
<dbReference type="PIR" id="T52503">
    <property type="entry name" value="T52503"/>
</dbReference>
<dbReference type="RefSeq" id="WP_011229047.1">
    <property type="nucleotide sequence ID" value="NC_006461.1"/>
</dbReference>
<dbReference type="RefSeq" id="YP_145225.1">
    <property type="nucleotide sequence ID" value="NC_006461.1"/>
</dbReference>
<dbReference type="PDB" id="1EIY">
    <property type="method" value="X-ray"/>
    <property type="resolution" value="3.30 A"/>
    <property type="chains" value="B=1-785"/>
</dbReference>
<dbReference type="PDB" id="1JJC">
    <property type="method" value="X-ray"/>
    <property type="resolution" value="2.60 A"/>
    <property type="chains" value="B=1-785"/>
</dbReference>
<dbReference type="PDB" id="1PYS">
    <property type="method" value="X-ray"/>
    <property type="resolution" value="2.90 A"/>
    <property type="chains" value="B=1-785"/>
</dbReference>
<dbReference type="PDB" id="3HFZ">
    <property type="method" value="X-ray"/>
    <property type="resolution" value="2.90 A"/>
    <property type="chains" value="B=1-785"/>
</dbReference>
<dbReference type="PDBsum" id="1EIY"/>
<dbReference type="PDBsum" id="1JJC"/>
<dbReference type="PDBsum" id="1PYS"/>
<dbReference type="PDBsum" id="3HFZ"/>
<dbReference type="SMR" id="Q5SGX1"/>
<dbReference type="EnsemblBacteria" id="BAD71782">
    <property type="protein sequence ID" value="BAD71782"/>
    <property type="gene ID" value="BAD71782"/>
</dbReference>
<dbReference type="GeneID" id="3169713"/>
<dbReference type="KEGG" id="ttj:TTHA1959"/>
<dbReference type="PATRIC" id="fig|300852.9.peg.1931"/>
<dbReference type="eggNOG" id="COG0072">
    <property type="taxonomic scope" value="Bacteria"/>
</dbReference>
<dbReference type="eggNOG" id="COG0073">
    <property type="taxonomic scope" value="Bacteria"/>
</dbReference>
<dbReference type="HOGENOM" id="CLU_016891_0_0_0"/>
<dbReference type="PhylomeDB" id="Q5SGX1"/>
<dbReference type="BRENDA" id="6.1.1.20">
    <property type="organism ID" value="2305"/>
</dbReference>
<dbReference type="EvolutionaryTrace" id="Q5SGX1"/>
<dbReference type="Proteomes" id="UP000000532">
    <property type="component" value="Chromosome"/>
</dbReference>
<dbReference type="GO" id="GO:0009328">
    <property type="term" value="C:phenylalanine-tRNA ligase complex"/>
    <property type="evidence" value="ECO:0007669"/>
    <property type="project" value="TreeGrafter"/>
</dbReference>
<dbReference type="GO" id="GO:0005524">
    <property type="term" value="F:ATP binding"/>
    <property type="evidence" value="ECO:0007669"/>
    <property type="project" value="UniProtKB-UniRule"/>
</dbReference>
<dbReference type="GO" id="GO:0000287">
    <property type="term" value="F:magnesium ion binding"/>
    <property type="evidence" value="ECO:0007669"/>
    <property type="project" value="UniProtKB-UniRule"/>
</dbReference>
<dbReference type="GO" id="GO:0004826">
    <property type="term" value="F:phenylalanine-tRNA ligase activity"/>
    <property type="evidence" value="ECO:0007669"/>
    <property type="project" value="UniProtKB-UniRule"/>
</dbReference>
<dbReference type="GO" id="GO:0000049">
    <property type="term" value="F:tRNA binding"/>
    <property type="evidence" value="ECO:0007669"/>
    <property type="project" value="UniProtKB-KW"/>
</dbReference>
<dbReference type="GO" id="GO:0006432">
    <property type="term" value="P:phenylalanyl-tRNA aminoacylation"/>
    <property type="evidence" value="ECO:0007669"/>
    <property type="project" value="UniProtKB-UniRule"/>
</dbReference>
<dbReference type="CDD" id="cd00769">
    <property type="entry name" value="PheRS_beta_core"/>
    <property type="match status" value="1"/>
</dbReference>
<dbReference type="CDD" id="cd02796">
    <property type="entry name" value="tRNA_bind_bactPheRS"/>
    <property type="match status" value="1"/>
</dbReference>
<dbReference type="FunFam" id="3.30.56.10:FF:000002">
    <property type="entry name" value="Phenylalanine--tRNA ligase beta subunit"/>
    <property type="match status" value="1"/>
</dbReference>
<dbReference type="FunFam" id="3.30.70.380:FF:000001">
    <property type="entry name" value="Phenylalanine--tRNA ligase beta subunit"/>
    <property type="match status" value="1"/>
</dbReference>
<dbReference type="FunFam" id="3.50.40.10:FF:000001">
    <property type="entry name" value="Phenylalanine--tRNA ligase beta subunit"/>
    <property type="match status" value="1"/>
</dbReference>
<dbReference type="Gene3D" id="3.30.56.10">
    <property type="match status" value="2"/>
</dbReference>
<dbReference type="Gene3D" id="3.30.930.10">
    <property type="entry name" value="Bira Bifunctional Protein, Domain 2"/>
    <property type="match status" value="1"/>
</dbReference>
<dbReference type="Gene3D" id="3.30.70.380">
    <property type="entry name" value="Ferrodoxin-fold anticodon-binding domain"/>
    <property type="match status" value="1"/>
</dbReference>
<dbReference type="Gene3D" id="2.40.50.140">
    <property type="entry name" value="Nucleic acid-binding proteins"/>
    <property type="match status" value="1"/>
</dbReference>
<dbReference type="Gene3D" id="3.50.40.10">
    <property type="entry name" value="Phenylalanyl-trna Synthetase, Chain B, domain 3"/>
    <property type="match status" value="1"/>
</dbReference>
<dbReference type="HAMAP" id="MF_00283">
    <property type="entry name" value="Phe_tRNA_synth_beta1"/>
    <property type="match status" value="1"/>
</dbReference>
<dbReference type="InterPro" id="IPR045864">
    <property type="entry name" value="aa-tRNA-synth_II/BPL/LPL"/>
</dbReference>
<dbReference type="InterPro" id="IPR005146">
    <property type="entry name" value="B3/B4_tRNA-bd"/>
</dbReference>
<dbReference type="InterPro" id="IPR009061">
    <property type="entry name" value="DNA-bd_dom_put_sf"/>
</dbReference>
<dbReference type="InterPro" id="IPR005121">
    <property type="entry name" value="Fdx_antiC-bd"/>
</dbReference>
<dbReference type="InterPro" id="IPR036690">
    <property type="entry name" value="Fdx_antiC-bd_sf"/>
</dbReference>
<dbReference type="InterPro" id="IPR012340">
    <property type="entry name" value="NA-bd_OB-fold"/>
</dbReference>
<dbReference type="InterPro" id="IPR045060">
    <property type="entry name" value="Phe-tRNA-ligase_IIc_bsu"/>
</dbReference>
<dbReference type="InterPro" id="IPR004532">
    <property type="entry name" value="Phe-tRNA-ligase_IIc_bsu_bact"/>
</dbReference>
<dbReference type="InterPro" id="IPR020825">
    <property type="entry name" value="Phe-tRNA_synthase-like_B3/B4"/>
</dbReference>
<dbReference type="InterPro" id="IPR041616">
    <property type="entry name" value="PheRS_beta_core"/>
</dbReference>
<dbReference type="InterPro" id="IPR002547">
    <property type="entry name" value="tRNA-bd_dom"/>
</dbReference>
<dbReference type="InterPro" id="IPR033714">
    <property type="entry name" value="tRNA_bind_bactPheRS"/>
</dbReference>
<dbReference type="InterPro" id="IPR005147">
    <property type="entry name" value="tRNA_synthase_B5-dom"/>
</dbReference>
<dbReference type="NCBIfam" id="TIGR00472">
    <property type="entry name" value="pheT_bact"/>
    <property type="match status" value="1"/>
</dbReference>
<dbReference type="PANTHER" id="PTHR10947:SF0">
    <property type="entry name" value="PHENYLALANINE--TRNA LIGASE BETA SUBUNIT"/>
    <property type="match status" value="1"/>
</dbReference>
<dbReference type="PANTHER" id="PTHR10947">
    <property type="entry name" value="PHENYLALANYL-TRNA SYNTHETASE BETA CHAIN AND LEUCINE-RICH REPEAT-CONTAINING PROTEIN 47"/>
    <property type="match status" value="1"/>
</dbReference>
<dbReference type="Pfam" id="PF03483">
    <property type="entry name" value="B3_4"/>
    <property type="match status" value="1"/>
</dbReference>
<dbReference type="Pfam" id="PF03484">
    <property type="entry name" value="B5"/>
    <property type="match status" value="1"/>
</dbReference>
<dbReference type="Pfam" id="PF03147">
    <property type="entry name" value="FDX-ACB"/>
    <property type="match status" value="1"/>
</dbReference>
<dbReference type="Pfam" id="PF17759">
    <property type="entry name" value="tRNA_synthFbeta"/>
    <property type="match status" value="1"/>
</dbReference>
<dbReference type="SMART" id="SM00873">
    <property type="entry name" value="B3_4"/>
    <property type="match status" value="1"/>
</dbReference>
<dbReference type="SMART" id="SM00874">
    <property type="entry name" value="B5"/>
    <property type="match status" value="1"/>
</dbReference>
<dbReference type="SMART" id="SM00896">
    <property type="entry name" value="FDX-ACB"/>
    <property type="match status" value="1"/>
</dbReference>
<dbReference type="SUPFAM" id="SSF54991">
    <property type="entry name" value="Anticodon-binding domain of PheRS"/>
    <property type="match status" value="1"/>
</dbReference>
<dbReference type="SUPFAM" id="SSF55681">
    <property type="entry name" value="Class II aaRS and biotin synthetases"/>
    <property type="match status" value="1"/>
</dbReference>
<dbReference type="SUPFAM" id="SSF50249">
    <property type="entry name" value="Nucleic acid-binding proteins"/>
    <property type="match status" value="1"/>
</dbReference>
<dbReference type="SUPFAM" id="SSF56037">
    <property type="entry name" value="PheT/TilS domain"/>
    <property type="match status" value="1"/>
</dbReference>
<dbReference type="SUPFAM" id="SSF46955">
    <property type="entry name" value="Putative DNA-binding domain"/>
    <property type="match status" value="2"/>
</dbReference>
<dbReference type="PROSITE" id="PS51483">
    <property type="entry name" value="B5"/>
    <property type="match status" value="1"/>
</dbReference>
<dbReference type="PROSITE" id="PS51447">
    <property type="entry name" value="FDX_ACB"/>
    <property type="match status" value="1"/>
</dbReference>
<dbReference type="PROSITE" id="PS50886">
    <property type="entry name" value="TRBD"/>
    <property type="match status" value="1"/>
</dbReference>